<organism>
    <name type="scientific">Francisella philomiragia subsp. philomiragia (strain ATCC 25017 / CCUG 19701 / FSC 153 / O#319-036)</name>
    <dbReference type="NCBI Taxonomy" id="484022"/>
    <lineage>
        <taxon>Bacteria</taxon>
        <taxon>Pseudomonadati</taxon>
        <taxon>Pseudomonadota</taxon>
        <taxon>Gammaproteobacteria</taxon>
        <taxon>Thiotrichales</taxon>
        <taxon>Francisellaceae</taxon>
        <taxon>Francisella</taxon>
    </lineage>
</organism>
<comment type="function">
    <text evidence="1">Required for insertion of 4Fe-4S clusters for at least IspG.</text>
</comment>
<comment type="cofactor">
    <cofactor evidence="1">
        <name>iron-sulfur cluster</name>
        <dbReference type="ChEBI" id="CHEBI:30408"/>
    </cofactor>
    <text evidence="1">Binds 1 iron-sulfur cluster per subunit.</text>
</comment>
<comment type="subunit">
    <text evidence="1">Homodimer.</text>
</comment>
<comment type="similarity">
    <text evidence="1">Belongs to the HesB/IscA family.</text>
</comment>
<proteinExistence type="inferred from homology"/>
<sequence>MSEVVQSVDPINFTESASLKVKELIEEEGDNSLSLRVYITGGGCSGFQYAFAFDNEIKEDDMVITKNGVRLLVDSMSFQYLVGADVDYKDDVEGAYFVIRNPNAKTTCGCGSSFSV</sequence>
<evidence type="ECO:0000255" key="1">
    <source>
        <dbReference type="HAMAP-Rule" id="MF_01380"/>
    </source>
</evidence>
<reference key="1">
    <citation type="submission" date="2007-12" db="EMBL/GenBank/DDBJ databases">
        <title>Complete sequence of chromosome of Francisella philomiragia subsp. philomiragia ATCC 25017.</title>
        <authorList>
            <consortium name="US DOE Joint Genome Institute"/>
            <person name="Copeland A."/>
            <person name="Lucas S."/>
            <person name="Lapidus A."/>
            <person name="Barry K."/>
            <person name="Detter J.C."/>
            <person name="Glavina del Rio T."/>
            <person name="Hammon N."/>
            <person name="Israni S."/>
            <person name="Dalin E."/>
            <person name="Tice H."/>
            <person name="Pitluck S."/>
            <person name="Chain P."/>
            <person name="Malfatti S."/>
            <person name="Shin M."/>
            <person name="Vergez L."/>
            <person name="Schmutz J."/>
            <person name="Larimer F."/>
            <person name="Land M."/>
            <person name="Hauser L."/>
            <person name="Richardson P."/>
        </authorList>
    </citation>
    <scope>NUCLEOTIDE SEQUENCE [LARGE SCALE GENOMIC DNA]</scope>
    <source>
        <strain>ATCC 25017 / CCUG 19701 / FSC 153 / O#319-036</strain>
    </source>
</reference>
<accession>B0TZ08</accession>
<gene>
    <name evidence="1" type="primary">erpA</name>
    <name type="ordered locus">Fphi_0231</name>
</gene>
<name>ERPA_FRAP2</name>
<dbReference type="EMBL" id="CP000937">
    <property type="protein sequence ID" value="ABZ86447.1"/>
    <property type="molecule type" value="Genomic_DNA"/>
</dbReference>
<dbReference type="SMR" id="B0TZ08"/>
<dbReference type="KEGG" id="fph:Fphi_0231"/>
<dbReference type="eggNOG" id="COG0316">
    <property type="taxonomic scope" value="Bacteria"/>
</dbReference>
<dbReference type="HOGENOM" id="CLU_069054_5_3_6"/>
<dbReference type="GO" id="GO:0051537">
    <property type="term" value="F:2 iron, 2 sulfur cluster binding"/>
    <property type="evidence" value="ECO:0007669"/>
    <property type="project" value="UniProtKB-ARBA"/>
</dbReference>
<dbReference type="GO" id="GO:0051539">
    <property type="term" value="F:4 iron, 4 sulfur cluster binding"/>
    <property type="evidence" value="ECO:0007669"/>
    <property type="project" value="TreeGrafter"/>
</dbReference>
<dbReference type="GO" id="GO:0005506">
    <property type="term" value="F:iron ion binding"/>
    <property type="evidence" value="ECO:0007669"/>
    <property type="project" value="UniProtKB-UniRule"/>
</dbReference>
<dbReference type="GO" id="GO:0016226">
    <property type="term" value="P:iron-sulfur cluster assembly"/>
    <property type="evidence" value="ECO:0007669"/>
    <property type="project" value="UniProtKB-UniRule"/>
</dbReference>
<dbReference type="FunFam" id="2.60.300.12:FF:000002">
    <property type="entry name" value="Iron-sulfur cluster insertion protein ErpA"/>
    <property type="match status" value="1"/>
</dbReference>
<dbReference type="Gene3D" id="2.60.300.12">
    <property type="entry name" value="HesB-like domain"/>
    <property type="match status" value="1"/>
</dbReference>
<dbReference type="HAMAP" id="MF_01380">
    <property type="entry name" value="Fe_S_insert_ErpA"/>
    <property type="match status" value="1"/>
</dbReference>
<dbReference type="InterPro" id="IPR000361">
    <property type="entry name" value="FeS_biogenesis"/>
</dbReference>
<dbReference type="InterPro" id="IPR016092">
    <property type="entry name" value="FeS_cluster_insertion"/>
</dbReference>
<dbReference type="InterPro" id="IPR017870">
    <property type="entry name" value="FeS_cluster_insertion_CS"/>
</dbReference>
<dbReference type="InterPro" id="IPR023063">
    <property type="entry name" value="FeS_cluster_insertion_RrpA"/>
</dbReference>
<dbReference type="InterPro" id="IPR035903">
    <property type="entry name" value="HesB-like_dom_sf"/>
</dbReference>
<dbReference type="NCBIfam" id="TIGR00049">
    <property type="entry name" value="iron-sulfur cluster assembly accessory protein"/>
    <property type="match status" value="1"/>
</dbReference>
<dbReference type="NCBIfam" id="NF010147">
    <property type="entry name" value="PRK13623.1"/>
    <property type="match status" value="1"/>
</dbReference>
<dbReference type="PANTHER" id="PTHR43011">
    <property type="entry name" value="IRON-SULFUR CLUSTER ASSEMBLY 2 HOMOLOG, MITOCHONDRIAL"/>
    <property type="match status" value="1"/>
</dbReference>
<dbReference type="PANTHER" id="PTHR43011:SF1">
    <property type="entry name" value="IRON-SULFUR CLUSTER ASSEMBLY 2 HOMOLOG, MITOCHONDRIAL"/>
    <property type="match status" value="1"/>
</dbReference>
<dbReference type="Pfam" id="PF01521">
    <property type="entry name" value="Fe-S_biosyn"/>
    <property type="match status" value="1"/>
</dbReference>
<dbReference type="SUPFAM" id="SSF89360">
    <property type="entry name" value="HesB-like domain"/>
    <property type="match status" value="1"/>
</dbReference>
<dbReference type="PROSITE" id="PS01152">
    <property type="entry name" value="HESB"/>
    <property type="match status" value="1"/>
</dbReference>
<feature type="chain" id="PRO_1000087298" description="Iron-sulfur cluster insertion protein ErpA">
    <location>
        <begin position="1"/>
        <end position="116"/>
    </location>
</feature>
<feature type="binding site" evidence="1">
    <location>
        <position position="44"/>
    </location>
    <ligand>
        <name>iron-sulfur cluster</name>
        <dbReference type="ChEBI" id="CHEBI:30408"/>
    </ligand>
</feature>
<feature type="binding site" evidence="1">
    <location>
        <position position="108"/>
    </location>
    <ligand>
        <name>iron-sulfur cluster</name>
        <dbReference type="ChEBI" id="CHEBI:30408"/>
    </ligand>
</feature>
<feature type="binding site" evidence="1">
    <location>
        <position position="110"/>
    </location>
    <ligand>
        <name>iron-sulfur cluster</name>
        <dbReference type="ChEBI" id="CHEBI:30408"/>
    </ligand>
</feature>
<protein>
    <recommendedName>
        <fullName evidence="1">Iron-sulfur cluster insertion protein ErpA</fullName>
    </recommendedName>
</protein>
<keyword id="KW-0408">Iron</keyword>
<keyword id="KW-0411">Iron-sulfur</keyword>
<keyword id="KW-0479">Metal-binding</keyword>